<protein>
    <recommendedName>
        <fullName evidence="8">L-ornithine N(5)-monooxygenase</fullName>
        <ecNumber evidence="1 2">1.14.13.195</ecNumber>
    </recommendedName>
    <alternativeName>
        <fullName evidence="7">L-ornithine N(5)-hydroxylase</fullName>
        <shortName evidence="8">Ornithine hydroxylase</shortName>
    </alternativeName>
    <alternativeName>
        <fullName evidence="9">L-ornithine N(5)-oxygenase</fullName>
    </alternativeName>
    <alternativeName>
        <fullName evidence="9">Pyoverdin biosynthesis protein A</fullName>
    </alternativeName>
</protein>
<organism>
    <name type="scientific">Pseudomonas aeruginosa (strain ATCC 15692 / DSM 22644 / CIP 104116 / JCM 14847 / LMG 12228 / 1C / PRS 101 / PAO1)</name>
    <dbReference type="NCBI Taxonomy" id="208964"/>
    <lineage>
        <taxon>Bacteria</taxon>
        <taxon>Pseudomonadati</taxon>
        <taxon>Pseudomonadota</taxon>
        <taxon>Gammaproteobacteria</taxon>
        <taxon>Pseudomonadales</taxon>
        <taxon>Pseudomonadaceae</taxon>
        <taxon>Pseudomonas</taxon>
    </lineage>
</organism>
<reference key="1">
    <citation type="journal article" date="1994" name="J. Bacteriol.">
        <title>Cloning and nucleotide sequence of the pvdA gene encoding the pyoverdin biosynthetic enzyme L-ornithine N5-oxygenase in Pseudomonas aeruginosa.</title>
        <authorList>
            <person name="Visca P."/>
            <person name="Ciervo A."/>
            <person name="Orsi N."/>
        </authorList>
    </citation>
    <scope>NUCLEOTIDE SEQUENCE [GENOMIC DNA]</scope>
    <scope>FUNCTION</scope>
    <scope>PATHWAY</scope>
    <source>
        <strain>ATCC 15692 / DSM 22644 / CIP 104116 / JCM 14847 / LMG 12228 / 1C / PRS 101 / PAO1</strain>
    </source>
</reference>
<reference key="2">
    <citation type="journal article" date="2000" name="Nature">
        <title>Complete genome sequence of Pseudomonas aeruginosa PAO1, an opportunistic pathogen.</title>
        <authorList>
            <person name="Stover C.K."/>
            <person name="Pham X.-Q.T."/>
            <person name="Erwin A.L."/>
            <person name="Mizoguchi S.D."/>
            <person name="Warrener P."/>
            <person name="Hickey M.J."/>
            <person name="Brinkman F.S.L."/>
            <person name="Hufnagle W.O."/>
            <person name="Kowalik D.J."/>
            <person name="Lagrou M."/>
            <person name="Garber R.L."/>
            <person name="Goltry L."/>
            <person name="Tolentino E."/>
            <person name="Westbrock-Wadman S."/>
            <person name="Yuan Y."/>
            <person name="Brody L.L."/>
            <person name="Coulter S.N."/>
            <person name="Folger K.R."/>
            <person name="Kas A."/>
            <person name="Larbig K."/>
            <person name="Lim R.M."/>
            <person name="Smith K.A."/>
            <person name="Spencer D.H."/>
            <person name="Wong G.K.-S."/>
            <person name="Wu Z."/>
            <person name="Paulsen I.T."/>
            <person name="Reizer J."/>
            <person name="Saier M.H. Jr."/>
            <person name="Hancock R.E.W."/>
            <person name="Lory S."/>
            <person name="Olson M.V."/>
        </authorList>
    </citation>
    <scope>NUCLEOTIDE SEQUENCE [LARGE SCALE GENOMIC DNA]</scope>
    <source>
        <strain>ATCC 15692 / DSM 22644 / CIP 104116 / JCM 14847 / LMG 12228 / 1C / PRS 101 / PAO1</strain>
    </source>
</reference>
<reference key="3">
    <citation type="journal article" date="2006" name="J. Bacteriol.">
        <title>Heterologous expression, purification, and characterization of an l-ornithine N(5)-hydroxylase involved in pyoverdine siderophore biosynthesis in Pseudomonas aeruginosa.</title>
        <authorList>
            <person name="Ge L."/>
            <person name="Seah S.Y."/>
        </authorList>
    </citation>
    <scope>FUNCTION</scope>
    <scope>CATALYTIC ACTIVITY</scope>
    <scope>BIOPHYSICOCHEMICAL PROPERTIES</scope>
    <scope>SUBUNIT</scope>
</reference>
<reference key="4">
    <citation type="journal article" date="2007" name="Biochemistry">
        <title>Biochemical characterization of a flavin adenine dinucleotide-dependent monooxygenase, ornithine hydroxylase from Pseudomonas aeruginosa, suggests a novel reaction mechanism.</title>
        <authorList>
            <person name="Meneely K.M."/>
            <person name="Lamb A.L."/>
        </authorList>
    </citation>
    <scope>CATALYTIC ACTIVITY</scope>
    <scope>BIOPHYSICOCHEMICAL PROPERTIES</scope>
</reference>
<reference key="5">
    <citation type="journal article" date="2008" name="Microbiology">
        <title>Membrane-association determinants of the omega-amino acid monooxygenase PvdA, a pyoverdine biosynthetic enzyme from Pseudomonas aeruginosa.</title>
        <authorList>
            <person name="Imperi F."/>
            <person name="Putignani L."/>
            <person name="Tiburzi F."/>
            <person name="Ambrosi C."/>
            <person name="Cipollone R."/>
            <person name="Ascenzi P."/>
            <person name="Visca P."/>
        </authorList>
    </citation>
    <scope>SUBCELLULAR LOCATION</scope>
    <scope>MUTAGENESIS OF GLY-215</scope>
</reference>
<reference key="6">
    <citation type="journal article" date="2009" name="Biochemistry">
        <title>Kinetic mechanism of ornithine hydroxylase (PvdA) from Pseudomonas aeruginosa: substrate triggering of O2 addition but not flavin reduction.</title>
        <authorList>
            <person name="Meneely K.M."/>
            <person name="Barr E.W."/>
            <person name="Bollinger J.M. Jr."/>
            <person name="Lamb A.L."/>
        </authorList>
    </citation>
    <scope>FUNCTION</scope>
</reference>
<reference key="7">
    <citation type="journal article" date="2011" name="J. Biol. Chem.">
        <title>Two structures of an N-hydroxylating flavoprotein monooxygenase: ornithine hydroxylase from Pseudomonas aeruginosa.</title>
        <authorList>
            <person name="Olucha J."/>
            <person name="Meneely K.M."/>
            <person name="Chilton A.S."/>
            <person name="Lamb A.L."/>
        </authorList>
    </citation>
    <scope>X-RAY CRYSTALLOGRAPHY (1.90 ANGSTROMS) IN COMPLEX WITH FAD; NADP; L-ORNITHINE AND N(5)-HYDROXY-L-ORNITHINE</scope>
    <scope>COFACTOR</scope>
</reference>
<proteinExistence type="evidence at protein level"/>
<comment type="function">
    <text evidence="1 4 6">Catalyzes the conversion of L-ornithine to N(5)-hydroxyornithine, the first step in the biosynthesis of all hydroxamate-containing siderophores, such as pyoverdin. Pyoverdin is a hydroxamate siderophore composed of a 6,7-dihydroxyquinoline-containing fluorescent chromophore joined to the N-terminus of a partly cyclic octapeptide (D-Ser-L-Arg-D-Ser-L-N(5)-OH-Orn-L-Lys-L-N(5)-OH-Orn-L-Thr-L-Thr in strain PAO1). Specific for NADPH, which plays a role in stabilization of the C4a-hydroperoxyflavin intermediate.</text>
</comment>
<comment type="catalytic activity">
    <reaction evidence="1 2">
        <text>L-ornithine + NADPH + O2 = N(5)-hydroxy-L-ornithine + NADP(+) + H2O</text>
        <dbReference type="Rhea" id="RHEA:41508"/>
        <dbReference type="ChEBI" id="CHEBI:15377"/>
        <dbReference type="ChEBI" id="CHEBI:15379"/>
        <dbReference type="ChEBI" id="CHEBI:46911"/>
        <dbReference type="ChEBI" id="CHEBI:57783"/>
        <dbReference type="ChEBI" id="CHEBI:58349"/>
        <dbReference type="ChEBI" id="CHEBI:78275"/>
        <dbReference type="EC" id="1.14.13.195"/>
    </reaction>
</comment>
<comment type="cofactor">
    <cofactor evidence="5">
        <name>FAD</name>
        <dbReference type="ChEBI" id="CHEBI:57692"/>
    </cofactor>
    <text evidence="5">Binds 1 FAD per subunit.</text>
</comment>
<comment type="biophysicochemical properties">
    <kinetics>
        <KM evidence="1">0.58 mM for L-ornithine</KM>
        <KM evidence="2">0.6 mM for L-ornithine</KM>
        <KM evidence="1">160 uM for NADPH</KM>
        <KM evidence="1">21.9 uM for FAD(+)</KM>
        <Vmax evidence="1">1.34 umol/min/mg enzyme</Vmax>
        <Vmax evidence="1">479.0 nmol/min/mg enzyme</Vmax>
    </kinetics>
    <phDependence>
        <text evidence="1 2">Optimum pH is 8.0-8.5.</text>
    </phDependence>
</comment>
<comment type="pathway">
    <text evidence="6">Siderophore biosynthesis; pyoverdin biosynthesis.</text>
</comment>
<comment type="subunit">
    <text evidence="1">Homotetramer.</text>
</comment>
<comment type="subcellular location">
    <subcellularLocation>
        <location evidence="3">Cell inner membrane</location>
        <topology evidence="3">Peripheral membrane protein</topology>
        <orientation evidence="3">Cytoplasmic side</orientation>
    </subcellularLocation>
</comment>
<comment type="similarity">
    <text evidence="10">Belongs to the lysine N(6)-hydroxylase/L-ornithine N(5)-oxygenase family.</text>
</comment>
<sequence length="443" mass="49478">MTQATATAVVHDLIGVGFGPSNIALAIALQERAQAQGALEVLFLDKQGDYRWHGNTLVSQSELQISFLKDLVSLRNPTSPYSFVNYLHKHDRLVDFINLGTFYPCRMEFNDYLRWVASHFQEQSRYGEEVLRIEPMLSAGQVEALRVISRNADGEELVRTTRALVVSPGGTPRIPQVFRALKGDGRVFHHSQYLEHMAKQPCSSGKPMKIAIIGGGQSAAEAFIDLNDSYPSVQADMILRASALKPADDSPFVNEVFAPKFTDLIYSREHAERERLLREYHNTNYSVVDTDLIERIYGVFYRQKVSGIPRHAFRCMTTVERATATAQGIELALRDAGSGELSVETYDAVILATGYERQLHRQLLEPLAEYLGDHEIGRDYRLQTDERCKVAIYAQGFSQASHGLSDTLLSVLPVRAEEISGSLYQHLKPGTAARALHEHALAS</sequence>
<name>PVDA_PSEAE</name>
<dbReference type="EC" id="1.14.13.195" evidence="1 2"/>
<dbReference type="EMBL" id="Z25465">
    <property type="protein sequence ID" value="CAA80959.1"/>
    <property type="molecule type" value="Genomic_DNA"/>
</dbReference>
<dbReference type="EMBL" id="AE004091">
    <property type="protein sequence ID" value="AAG05774.1"/>
    <property type="molecule type" value="Genomic_DNA"/>
</dbReference>
<dbReference type="PIR" id="A49892">
    <property type="entry name" value="A49892"/>
</dbReference>
<dbReference type="PIR" id="D83346">
    <property type="entry name" value="D83346"/>
</dbReference>
<dbReference type="RefSeq" id="NP_251076.1">
    <property type="nucleotide sequence ID" value="NC_002516.2"/>
</dbReference>
<dbReference type="RefSeq" id="WP_003114509.1">
    <property type="nucleotide sequence ID" value="NZ_QZGE01000021.1"/>
</dbReference>
<dbReference type="PDB" id="3S5W">
    <property type="method" value="X-ray"/>
    <property type="resolution" value="1.90 A"/>
    <property type="chains" value="A/B=1-443"/>
</dbReference>
<dbReference type="PDB" id="3S61">
    <property type="method" value="X-ray"/>
    <property type="resolution" value="3.03 A"/>
    <property type="chains" value="A/B=1-443"/>
</dbReference>
<dbReference type="PDBsum" id="3S5W"/>
<dbReference type="PDBsum" id="3S61"/>
<dbReference type="SMR" id="Q51548"/>
<dbReference type="IntAct" id="Q51548">
    <property type="interactions" value="3"/>
</dbReference>
<dbReference type="MINT" id="Q51548"/>
<dbReference type="STRING" id="208964.PA2386"/>
<dbReference type="PaxDb" id="208964-PA2386"/>
<dbReference type="GeneID" id="882167"/>
<dbReference type="KEGG" id="pae:PA2386"/>
<dbReference type="PATRIC" id="fig|208964.12.peg.2496"/>
<dbReference type="PseudoCAP" id="PA2386"/>
<dbReference type="HOGENOM" id="CLU_020931_2_0_6"/>
<dbReference type="InParanoid" id="Q51548"/>
<dbReference type="OrthoDB" id="7527071at2"/>
<dbReference type="PhylomeDB" id="Q51548"/>
<dbReference type="BioCyc" id="MetaCyc:MONOMER-15307"/>
<dbReference type="BioCyc" id="PAER208964:G1FZ6-2424-MONOMER"/>
<dbReference type="BRENDA" id="1.14.13.195">
    <property type="organism ID" value="5087"/>
</dbReference>
<dbReference type="UniPathway" id="UPA00019"/>
<dbReference type="EvolutionaryTrace" id="Q51548"/>
<dbReference type="PHI-base" id="PHI:6937"/>
<dbReference type="PHI-base" id="PHI:7942"/>
<dbReference type="Proteomes" id="UP000002438">
    <property type="component" value="Chromosome"/>
</dbReference>
<dbReference type="GO" id="GO:0005737">
    <property type="term" value="C:cytoplasm"/>
    <property type="evidence" value="ECO:0000314"/>
    <property type="project" value="PseudoCAP"/>
</dbReference>
<dbReference type="GO" id="GO:0005886">
    <property type="term" value="C:plasma membrane"/>
    <property type="evidence" value="ECO:0007669"/>
    <property type="project" value="UniProtKB-SubCell"/>
</dbReference>
<dbReference type="GO" id="GO:0031172">
    <property type="term" value="F:ornithine N5-monooxygenase activity"/>
    <property type="evidence" value="ECO:0007669"/>
    <property type="project" value="RHEA"/>
</dbReference>
<dbReference type="GO" id="GO:0006879">
    <property type="term" value="P:intracellular iron ion homeostasis"/>
    <property type="evidence" value="ECO:0000318"/>
    <property type="project" value="GO_Central"/>
</dbReference>
<dbReference type="GO" id="GO:0002049">
    <property type="term" value="P:pyoverdine biosynthetic process"/>
    <property type="evidence" value="ECO:0000314"/>
    <property type="project" value="PseudoCAP"/>
</dbReference>
<dbReference type="Gene3D" id="3.50.50.60">
    <property type="entry name" value="FAD/NAD(P)-binding domain"/>
    <property type="match status" value="1"/>
</dbReference>
<dbReference type="InterPro" id="IPR036188">
    <property type="entry name" value="FAD/NAD-bd_sf"/>
</dbReference>
<dbReference type="InterPro" id="IPR025700">
    <property type="entry name" value="Lys/Orn_oxygenase"/>
</dbReference>
<dbReference type="PANTHER" id="PTHR42802:SF1">
    <property type="entry name" value="L-ORNITHINE N(5)-MONOOXYGENASE"/>
    <property type="match status" value="1"/>
</dbReference>
<dbReference type="PANTHER" id="PTHR42802">
    <property type="entry name" value="MONOOXYGENASE"/>
    <property type="match status" value="1"/>
</dbReference>
<dbReference type="Pfam" id="PF13434">
    <property type="entry name" value="Lys_Orn_oxgnase"/>
    <property type="match status" value="1"/>
</dbReference>
<dbReference type="PRINTS" id="PR00368">
    <property type="entry name" value="FADPNR"/>
</dbReference>
<dbReference type="SUPFAM" id="SSF51905">
    <property type="entry name" value="FAD/NAD(P)-binding domain"/>
    <property type="match status" value="2"/>
</dbReference>
<gene>
    <name evidence="9" type="primary">pvdA</name>
    <name type="synonym">pvd-1</name>
    <name type="ordered locus">PA2386</name>
</gene>
<feature type="chain" id="PRO_0000204029" description="L-ornithine N(5)-monooxygenase">
    <location>
        <begin position="1"/>
        <end position="443"/>
    </location>
</feature>
<feature type="binding site" evidence="5">
    <location>
        <begin position="45"/>
        <end position="53"/>
    </location>
    <ligand>
        <name>FAD</name>
        <dbReference type="ChEBI" id="CHEBI:57692"/>
    </ligand>
</feature>
<feature type="binding site" evidence="5">
    <location>
        <position position="64"/>
    </location>
    <ligand>
        <name>FAD</name>
        <dbReference type="ChEBI" id="CHEBI:57692"/>
    </ligand>
</feature>
<feature type="binding site" evidence="5">
    <location>
        <position position="69"/>
    </location>
    <ligand>
        <name>substrate</name>
    </ligand>
</feature>
<feature type="binding site" evidence="5">
    <location>
        <position position="130"/>
    </location>
    <ligand>
        <name>FAD</name>
        <dbReference type="ChEBI" id="CHEBI:57692"/>
    </ligand>
</feature>
<feature type="binding site" evidence="5">
    <location>
        <begin position="215"/>
        <end position="218"/>
    </location>
    <ligand>
        <name>NADP(+)</name>
        <dbReference type="ChEBI" id="CHEBI:58349"/>
    </ligand>
</feature>
<feature type="binding site" evidence="5">
    <location>
        <position position="240"/>
    </location>
    <ligand>
        <name>NADP(+)</name>
        <dbReference type="ChEBI" id="CHEBI:58349"/>
    </ligand>
</feature>
<feature type="binding site" evidence="5">
    <location>
        <begin position="254"/>
        <end position="257"/>
    </location>
    <ligand>
        <name>substrate</name>
    </ligand>
</feature>
<feature type="binding site" evidence="5">
    <location>
        <begin position="284"/>
        <end position="286"/>
    </location>
    <ligand>
        <name>NADP(+)</name>
        <dbReference type="ChEBI" id="CHEBI:58349"/>
    </ligand>
</feature>
<feature type="binding site" evidence="5">
    <location>
        <position position="284"/>
    </location>
    <ligand>
        <name>substrate</name>
    </ligand>
</feature>
<feature type="binding site" evidence="5">
    <location>
        <begin position="407"/>
        <end position="409"/>
    </location>
    <ligand>
        <name>FAD</name>
        <dbReference type="ChEBI" id="CHEBI:57692"/>
    </ligand>
</feature>
<feature type="binding site" evidence="5">
    <location>
        <position position="410"/>
    </location>
    <ligand>
        <name>substrate</name>
    </ligand>
</feature>
<feature type="mutagenesis site" description="Loss of function." evidence="3">
    <original>G</original>
    <variation>D</variation>
    <location>
        <position position="215"/>
    </location>
</feature>
<feature type="sequence conflict" description="In Ref. 1; CAA80959." evidence="10" ref="1">
    <original>TDERCKVAIYAQGFSQASHGLSDTLLSVLPVRAEEISGSLYQHLKPGTAARALHEHALAS</original>
    <variation>PTSAARWRSTRRASARPAMASATPCCRCCRCVPRKSPAPCTST</variation>
    <location>
        <begin position="384"/>
        <end position="443"/>
    </location>
</feature>
<feature type="strand" evidence="11">
    <location>
        <begin position="10"/>
        <end position="16"/>
    </location>
</feature>
<feature type="helix" evidence="11">
    <location>
        <begin position="20"/>
        <end position="36"/>
    </location>
</feature>
<feature type="strand" evidence="11">
    <location>
        <begin position="41"/>
        <end position="46"/>
    </location>
</feature>
<feature type="helix" evidence="11">
    <location>
        <begin position="54"/>
        <end position="56"/>
    </location>
</feature>
<feature type="strand" evidence="11">
    <location>
        <begin position="69"/>
        <end position="72"/>
    </location>
</feature>
<feature type="turn" evidence="11">
    <location>
        <begin position="73"/>
        <end position="75"/>
    </location>
</feature>
<feature type="helix" evidence="11">
    <location>
        <begin position="83"/>
        <end position="89"/>
    </location>
</feature>
<feature type="helix" evidence="11">
    <location>
        <begin position="93"/>
        <end position="99"/>
    </location>
</feature>
<feature type="helix" evidence="11">
    <location>
        <begin position="106"/>
        <end position="117"/>
    </location>
</feature>
<feature type="helix" evidence="12">
    <location>
        <begin position="118"/>
        <end position="120"/>
    </location>
</feature>
<feature type="turn" evidence="11">
    <location>
        <begin position="121"/>
        <end position="123"/>
    </location>
</feature>
<feature type="strand" evidence="11">
    <location>
        <begin position="124"/>
        <end position="138"/>
    </location>
</feature>
<feature type="strand" evidence="11">
    <location>
        <begin position="141"/>
        <end position="151"/>
    </location>
</feature>
<feature type="strand" evidence="11">
    <location>
        <begin position="156"/>
        <end position="166"/>
    </location>
</feature>
<feature type="helix" evidence="11">
    <location>
        <begin position="176"/>
        <end position="181"/>
    </location>
</feature>
<feature type="strand" evidence="11">
    <location>
        <begin position="187"/>
        <end position="189"/>
    </location>
</feature>
<feature type="helix" evidence="11">
    <location>
        <begin position="190"/>
        <end position="192"/>
    </location>
</feature>
<feature type="helix" evidence="11">
    <location>
        <begin position="193"/>
        <end position="197"/>
    </location>
</feature>
<feature type="strand" evidence="11">
    <location>
        <begin position="208"/>
        <end position="213"/>
    </location>
</feature>
<feature type="helix" evidence="11">
    <location>
        <begin position="217"/>
        <end position="229"/>
    </location>
</feature>
<feature type="strand" evidence="11">
    <location>
        <begin position="233"/>
        <end position="238"/>
    </location>
</feature>
<feature type="strand" evidence="11">
    <location>
        <begin position="240"/>
        <end position="243"/>
    </location>
</feature>
<feature type="helix" evidence="11">
    <location>
        <begin position="251"/>
        <end position="254"/>
    </location>
</feature>
<feature type="helix" evidence="11">
    <location>
        <begin position="255"/>
        <end position="257"/>
    </location>
</feature>
<feature type="helix" evidence="11">
    <location>
        <begin position="259"/>
        <end position="267"/>
    </location>
</feature>
<feature type="helix" evidence="11">
    <location>
        <begin position="270"/>
        <end position="279"/>
    </location>
</feature>
<feature type="helix" evidence="11">
    <location>
        <begin position="281"/>
        <end position="283"/>
    </location>
</feature>
<feature type="strand" evidence="12">
    <location>
        <begin position="285"/>
        <end position="288"/>
    </location>
</feature>
<feature type="helix" evidence="11">
    <location>
        <begin position="290"/>
        <end position="306"/>
    </location>
</feature>
<feature type="strand" evidence="11">
    <location>
        <begin position="311"/>
        <end position="314"/>
    </location>
</feature>
<feature type="strand" evidence="11">
    <location>
        <begin position="317"/>
        <end position="325"/>
    </location>
</feature>
<feature type="strand" evidence="11">
    <location>
        <begin position="328"/>
        <end position="335"/>
    </location>
</feature>
<feature type="turn" evidence="11">
    <location>
        <begin position="336"/>
        <end position="338"/>
    </location>
</feature>
<feature type="strand" evidence="11">
    <location>
        <begin position="341"/>
        <end position="351"/>
    </location>
</feature>
<feature type="turn" evidence="11">
    <location>
        <begin position="362"/>
        <end position="364"/>
    </location>
</feature>
<feature type="helix" evidence="11">
    <location>
        <begin position="365"/>
        <end position="370"/>
    </location>
</feature>
<feature type="strand" evidence="11">
    <location>
        <begin position="390"/>
        <end position="396"/>
    </location>
</feature>
<feature type="helix" evidence="11">
    <location>
        <begin position="399"/>
        <end position="402"/>
    </location>
</feature>
<feature type="turn" evidence="11">
    <location>
        <begin position="404"/>
        <end position="407"/>
    </location>
</feature>
<feature type="helix" evidence="11">
    <location>
        <begin position="412"/>
        <end position="427"/>
    </location>
</feature>
<keyword id="KW-0002">3D-structure</keyword>
<keyword id="KW-0997">Cell inner membrane</keyword>
<keyword id="KW-1003">Cell membrane</keyword>
<keyword id="KW-0274">FAD</keyword>
<keyword id="KW-0285">Flavoprotein</keyword>
<keyword id="KW-0472">Membrane</keyword>
<keyword id="KW-0503">Monooxygenase</keyword>
<keyword id="KW-0521">NADP</keyword>
<keyword id="KW-0560">Oxidoreductase</keyword>
<keyword id="KW-1185">Reference proteome</keyword>
<accession>Q51548</accession>
<evidence type="ECO:0000269" key="1">
    <source>
    </source>
</evidence>
<evidence type="ECO:0000269" key="2">
    <source>
    </source>
</evidence>
<evidence type="ECO:0000269" key="3">
    <source>
    </source>
</evidence>
<evidence type="ECO:0000269" key="4">
    <source>
    </source>
</evidence>
<evidence type="ECO:0000269" key="5">
    <source>
    </source>
</evidence>
<evidence type="ECO:0000269" key="6">
    <source>
    </source>
</evidence>
<evidence type="ECO:0000303" key="7">
    <source>
    </source>
</evidence>
<evidence type="ECO:0000303" key="8">
    <source>
    </source>
</evidence>
<evidence type="ECO:0000303" key="9">
    <source>
    </source>
</evidence>
<evidence type="ECO:0000305" key="10"/>
<evidence type="ECO:0007829" key="11">
    <source>
        <dbReference type="PDB" id="3S5W"/>
    </source>
</evidence>
<evidence type="ECO:0007829" key="12">
    <source>
        <dbReference type="PDB" id="3S61"/>
    </source>
</evidence>